<gene>
    <name evidence="2" type="primary">rpsL</name>
    <name type="ordered locus">CV_4191</name>
</gene>
<keyword id="KW-0488">Methylation</keyword>
<keyword id="KW-1185">Reference proteome</keyword>
<keyword id="KW-0687">Ribonucleoprotein</keyword>
<keyword id="KW-0689">Ribosomal protein</keyword>
<keyword id="KW-0694">RNA-binding</keyword>
<keyword id="KW-0699">rRNA-binding</keyword>
<keyword id="KW-0820">tRNA-binding</keyword>
<sequence length="123" mass="13550">MPTINQLVRKGRVAITAKSKVPALEACPQKRGVCTRVYTTTPKKPNSALRKVCKVRLTNGFEVISYIGGEGHNLQEHSVVLIRGGRVKDLPGVRYHTVRGSLDTAGVKDRKQARSKYGAKRPK</sequence>
<dbReference type="EMBL" id="AE016825">
    <property type="protein sequence ID" value="AAQ61851.1"/>
    <property type="molecule type" value="Genomic_DNA"/>
</dbReference>
<dbReference type="RefSeq" id="WP_011137738.1">
    <property type="nucleotide sequence ID" value="NC_005085.1"/>
</dbReference>
<dbReference type="SMR" id="Q7NQE8"/>
<dbReference type="STRING" id="243365.CV_4191"/>
<dbReference type="GeneID" id="97477914"/>
<dbReference type="KEGG" id="cvi:CV_4191"/>
<dbReference type="eggNOG" id="COG0048">
    <property type="taxonomic scope" value="Bacteria"/>
</dbReference>
<dbReference type="HOGENOM" id="CLU_104295_1_2_4"/>
<dbReference type="OrthoDB" id="9802366at2"/>
<dbReference type="Proteomes" id="UP000001424">
    <property type="component" value="Chromosome"/>
</dbReference>
<dbReference type="GO" id="GO:0015935">
    <property type="term" value="C:small ribosomal subunit"/>
    <property type="evidence" value="ECO:0007669"/>
    <property type="project" value="InterPro"/>
</dbReference>
<dbReference type="GO" id="GO:0019843">
    <property type="term" value="F:rRNA binding"/>
    <property type="evidence" value="ECO:0007669"/>
    <property type="project" value="UniProtKB-UniRule"/>
</dbReference>
<dbReference type="GO" id="GO:0003735">
    <property type="term" value="F:structural constituent of ribosome"/>
    <property type="evidence" value="ECO:0007669"/>
    <property type="project" value="InterPro"/>
</dbReference>
<dbReference type="GO" id="GO:0000049">
    <property type="term" value="F:tRNA binding"/>
    <property type="evidence" value="ECO:0007669"/>
    <property type="project" value="UniProtKB-UniRule"/>
</dbReference>
<dbReference type="GO" id="GO:0006412">
    <property type="term" value="P:translation"/>
    <property type="evidence" value="ECO:0007669"/>
    <property type="project" value="UniProtKB-UniRule"/>
</dbReference>
<dbReference type="CDD" id="cd03368">
    <property type="entry name" value="Ribosomal_S12"/>
    <property type="match status" value="1"/>
</dbReference>
<dbReference type="FunFam" id="2.40.50.140:FF:000001">
    <property type="entry name" value="30S ribosomal protein S12"/>
    <property type="match status" value="1"/>
</dbReference>
<dbReference type="Gene3D" id="2.40.50.140">
    <property type="entry name" value="Nucleic acid-binding proteins"/>
    <property type="match status" value="1"/>
</dbReference>
<dbReference type="HAMAP" id="MF_00403_B">
    <property type="entry name" value="Ribosomal_uS12_B"/>
    <property type="match status" value="1"/>
</dbReference>
<dbReference type="InterPro" id="IPR012340">
    <property type="entry name" value="NA-bd_OB-fold"/>
</dbReference>
<dbReference type="InterPro" id="IPR006032">
    <property type="entry name" value="Ribosomal_uS12"/>
</dbReference>
<dbReference type="InterPro" id="IPR005679">
    <property type="entry name" value="Ribosomal_uS12_bac"/>
</dbReference>
<dbReference type="NCBIfam" id="TIGR00981">
    <property type="entry name" value="rpsL_bact"/>
    <property type="match status" value="1"/>
</dbReference>
<dbReference type="PANTHER" id="PTHR11652">
    <property type="entry name" value="30S RIBOSOMAL PROTEIN S12 FAMILY MEMBER"/>
    <property type="match status" value="1"/>
</dbReference>
<dbReference type="Pfam" id="PF00164">
    <property type="entry name" value="Ribosom_S12_S23"/>
    <property type="match status" value="1"/>
</dbReference>
<dbReference type="PIRSF" id="PIRSF002133">
    <property type="entry name" value="Ribosomal_S12/S23"/>
    <property type="match status" value="1"/>
</dbReference>
<dbReference type="PRINTS" id="PR01034">
    <property type="entry name" value="RIBOSOMALS12"/>
</dbReference>
<dbReference type="SUPFAM" id="SSF50249">
    <property type="entry name" value="Nucleic acid-binding proteins"/>
    <property type="match status" value="1"/>
</dbReference>
<dbReference type="PROSITE" id="PS00055">
    <property type="entry name" value="RIBOSOMAL_S12"/>
    <property type="match status" value="1"/>
</dbReference>
<evidence type="ECO:0000250" key="1"/>
<evidence type="ECO:0000255" key="2">
    <source>
        <dbReference type="HAMAP-Rule" id="MF_00403"/>
    </source>
</evidence>
<evidence type="ECO:0000256" key="3">
    <source>
        <dbReference type="SAM" id="MobiDB-lite"/>
    </source>
</evidence>
<evidence type="ECO:0000305" key="4"/>
<feature type="chain" id="PRO_0000146208" description="Small ribosomal subunit protein uS12">
    <location>
        <begin position="1"/>
        <end position="123"/>
    </location>
</feature>
<feature type="region of interest" description="Disordered" evidence="3">
    <location>
        <begin position="104"/>
        <end position="123"/>
    </location>
</feature>
<feature type="compositionally biased region" description="Basic residues" evidence="3">
    <location>
        <begin position="113"/>
        <end position="123"/>
    </location>
</feature>
<feature type="modified residue" description="3-methylthioaspartic acid" evidence="1">
    <location>
        <position position="89"/>
    </location>
</feature>
<name>RS12_CHRVO</name>
<protein>
    <recommendedName>
        <fullName evidence="2">Small ribosomal subunit protein uS12</fullName>
    </recommendedName>
    <alternativeName>
        <fullName evidence="4">30S ribosomal protein S12</fullName>
    </alternativeName>
</protein>
<reference key="1">
    <citation type="journal article" date="2003" name="Proc. Natl. Acad. Sci. U.S.A.">
        <title>The complete genome sequence of Chromobacterium violaceum reveals remarkable and exploitable bacterial adaptability.</title>
        <authorList>
            <person name="Vasconcelos A.T.R."/>
            <person name="de Almeida D.F."/>
            <person name="Hungria M."/>
            <person name="Guimaraes C.T."/>
            <person name="Antonio R.V."/>
            <person name="Almeida F.C."/>
            <person name="de Almeida L.G.P."/>
            <person name="de Almeida R."/>
            <person name="Alves-Gomes J.A."/>
            <person name="Andrade E.M."/>
            <person name="Araripe J."/>
            <person name="de Araujo M.F.F."/>
            <person name="Astolfi-Filho S."/>
            <person name="Azevedo V."/>
            <person name="Baptista A.J."/>
            <person name="Bataus L.A.M."/>
            <person name="Batista J.S."/>
            <person name="Belo A."/>
            <person name="van den Berg C."/>
            <person name="Bogo M."/>
            <person name="Bonatto S."/>
            <person name="Bordignon J."/>
            <person name="Brigido M.M."/>
            <person name="Brito C.A."/>
            <person name="Brocchi M."/>
            <person name="Burity H.A."/>
            <person name="Camargo A.A."/>
            <person name="Cardoso D.D.P."/>
            <person name="Carneiro N.P."/>
            <person name="Carraro D.M."/>
            <person name="Carvalho C.M.B."/>
            <person name="Cascardo J.C.M."/>
            <person name="Cavada B.S."/>
            <person name="Chueire L.M.O."/>
            <person name="Creczynski-Pasa T.B."/>
            <person name="Cunha-Junior N.C."/>
            <person name="Fagundes N."/>
            <person name="Falcao C.L."/>
            <person name="Fantinatti F."/>
            <person name="Farias I.P."/>
            <person name="Felipe M.S.S."/>
            <person name="Ferrari L.P."/>
            <person name="Ferro J.A."/>
            <person name="Ferro M.I.T."/>
            <person name="Franco G.R."/>
            <person name="Freitas N.S.A."/>
            <person name="Furlan L.R."/>
            <person name="Gazzinelli R.T."/>
            <person name="Gomes E.A."/>
            <person name="Goncalves P.R."/>
            <person name="Grangeiro T.B."/>
            <person name="Grattapaglia D."/>
            <person name="Grisard E.C."/>
            <person name="Hanna E.S."/>
            <person name="Jardim S.N."/>
            <person name="Laurino J."/>
            <person name="Leoi L.C.T."/>
            <person name="Lima L.F.A."/>
            <person name="Loureiro M.F."/>
            <person name="Lyra M.C.C.P."/>
            <person name="Madeira H.M.F."/>
            <person name="Manfio G.P."/>
            <person name="Maranhao A.Q."/>
            <person name="Martins W.S."/>
            <person name="di Mauro S.M.Z."/>
            <person name="de Medeiros S.R.B."/>
            <person name="Meissner R.V."/>
            <person name="Moreira M.A.M."/>
            <person name="Nascimento F.F."/>
            <person name="Nicolas M.F."/>
            <person name="Oliveira J.G."/>
            <person name="Oliveira S.C."/>
            <person name="Paixao R.F.C."/>
            <person name="Parente J.A."/>
            <person name="Pedrosa F.O."/>
            <person name="Pena S.D.J."/>
            <person name="Pereira J.O."/>
            <person name="Pereira M."/>
            <person name="Pinto L.S.R.C."/>
            <person name="Pinto L.S."/>
            <person name="Porto J.I.R."/>
            <person name="Potrich D.P."/>
            <person name="Ramalho-Neto C.E."/>
            <person name="Reis A.M.M."/>
            <person name="Rigo L.U."/>
            <person name="Rondinelli E."/>
            <person name="Santos E.B.P."/>
            <person name="Santos F.R."/>
            <person name="Schneider M.P.C."/>
            <person name="Seuanez H.N."/>
            <person name="Silva A.M.R."/>
            <person name="da Silva A.L.C."/>
            <person name="Silva D.W."/>
            <person name="Silva R."/>
            <person name="Simoes I.C."/>
            <person name="Simon D."/>
            <person name="Soares C.M.A."/>
            <person name="Soares R.B.A."/>
            <person name="Souza E.M."/>
            <person name="Souza K.R.L."/>
            <person name="Souza R.C."/>
            <person name="Steffens M.B.R."/>
            <person name="Steindel M."/>
            <person name="Teixeira S.R."/>
            <person name="Urmenyi T."/>
            <person name="Vettore A."/>
            <person name="Wassem R."/>
            <person name="Zaha A."/>
            <person name="Simpson A.J.G."/>
        </authorList>
    </citation>
    <scope>NUCLEOTIDE SEQUENCE [LARGE SCALE GENOMIC DNA]</scope>
    <source>
        <strain>ATCC 12472 / DSM 30191 / JCM 1249 / CCUG 213 / NBRC 12614 / NCIMB 9131 / NCTC 9757 / MK</strain>
    </source>
</reference>
<comment type="function">
    <text evidence="2">With S4 and S5 plays an important role in translational accuracy.</text>
</comment>
<comment type="function">
    <text evidence="2">Interacts with and stabilizes bases of the 16S rRNA that are involved in tRNA selection in the A site and with the mRNA backbone. Located at the interface of the 30S and 50S subunits, it traverses the body of the 30S subunit contacting proteins on the other side and probably holding the rRNA structure together. The combined cluster of proteins S8, S12 and S17 appears to hold together the shoulder and platform of the 30S subunit.</text>
</comment>
<comment type="subunit">
    <text evidence="2">Part of the 30S ribosomal subunit. Contacts proteins S8 and S17. May interact with IF1 in the 30S initiation complex.</text>
</comment>
<comment type="similarity">
    <text evidence="2">Belongs to the universal ribosomal protein uS12 family.</text>
</comment>
<proteinExistence type="inferred from homology"/>
<organism>
    <name type="scientific">Chromobacterium violaceum (strain ATCC 12472 / DSM 30191 / JCM 1249 / CCUG 213 / NBRC 12614 / NCIMB 9131 / NCTC 9757 / MK)</name>
    <dbReference type="NCBI Taxonomy" id="243365"/>
    <lineage>
        <taxon>Bacteria</taxon>
        <taxon>Pseudomonadati</taxon>
        <taxon>Pseudomonadota</taxon>
        <taxon>Betaproteobacteria</taxon>
        <taxon>Neisseriales</taxon>
        <taxon>Chromobacteriaceae</taxon>
        <taxon>Chromobacterium</taxon>
    </lineage>
</organism>
<accession>Q7NQE8</accession>